<reference key="1">
    <citation type="journal article" date="2015" name="Proc. Natl. Acad. Sci. U.S.A.">
        <title>Trichodesmium genome maintains abundant, widespread noncoding DNA in situ, despite oligotrophic lifestyle.</title>
        <authorList>
            <person name="Walworth N."/>
            <person name="Pfreundt U."/>
            <person name="Nelson W.C."/>
            <person name="Mincer T."/>
            <person name="Heidelberg J.F."/>
            <person name="Fu F."/>
            <person name="Waterbury J.B."/>
            <person name="Glavina del Rio T."/>
            <person name="Goodwin L."/>
            <person name="Kyrpides N.C."/>
            <person name="Land M.L."/>
            <person name="Woyke T."/>
            <person name="Hutchins D.A."/>
            <person name="Hess W.R."/>
            <person name="Webb E.A."/>
        </authorList>
    </citation>
    <scope>NUCLEOTIDE SEQUENCE [LARGE SCALE GENOMIC DNA]</scope>
    <source>
        <strain>IMS101</strain>
    </source>
</reference>
<dbReference type="EC" id="2.8.1.13" evidence="1"/>
<dbReference type="EMBL" id="CP000393">
    <property type="protein sequence ID" value="ABG50157.1"/>
    <property type="molecule type" value="Genomic_DNA"/>
</dbReference>
<dbReference type="SMR" id="Q118B7"/>
<dbReference type="STRING" id="203124.Tery_0725"/>
<dbReference type="KEGG" id="ter:Tery_0725"/>
<dbReference type="eggNOG" id="COG0482">
    <property type="taxonomic scope" value="Bacteria"/>
</dbReference>
<dbReference type="HOGENOM" id="CLU_035188_0_0_3"/>
<dbReference type="OrthoDB" id="9800696at2"/>
<dbReference type="GO" id="GO:0005737">
    <property type="term" value="C:cytoplasm"/>
    <property type="evidence" value="ECO:0007669"/>
    <property type="project" value="UniProtKB-SubCell"/>
</dbReference>
<dbReference type="GO" id="GO:0005524">
    <property type="term" value="F:ATP binding"/>
    <property type="evidence" value="ECO:0007669"/>
    <property type="project" value="UniProtKB-KW"/>
</dbReference>
<dbReference type="GO" id="GO:0000049">
    <property type="term" value="F:tRNA binding"/>
    <property type="evidence" value="ECO:0007669"/>
    <property type="project" value="UniProtKB-KW"/>
</dbReference>
<dbReference type="GO" id="GO:0103016">
    <property type="term" value="F:tRNA-uridine 2-sulfurtransferase activity"/>
    <property type="evidence" value="ECO:0007669"/>
    <property type="project" value="UniProtKB-EC"/>
</dbReference>
<dbReference type="GO" id="GO:0002143">
    <property type="term" value="P:tRNA wobble position uridine thiolation"/>
    <property type="evidence" value="ECO:0007669"/>
    <property type="project" value="TreeGrafter"/>
</dbReference>
<dbReference type="CDD" id="cd01998">
    <property type="entry name" value="MnmA_TRMU-like"/>
    <property type="match status" value="1"/>
</dbReference>
<dbReference type="FunFam" id="2.30.30.280:FF:000001">
    <property type="entry name" value="tRNA-specific 2-thiouridylase MnmA"/>
    <property type="match status" value="1"/>
</dbReference>
<dbReference type="FunFam" id="3.40.50.620:FF:000302">
    <property type="entry name" value="tRNA-specific 2-thiouridylase MnmA"/>
    <property type="match status" value="1"/>
</dbReference>
<dbReference type="Gene3D" id="2.30.30.280">
    <property type="entry name" value="Adenine nucleotide alpha hydrolases-like domains"/>
    <property type="match status" value="1"/>
</dbReference>
<dbReference type="Gene3D" id="3.40.50.620">
    <property type="entry name" value="HUPs"/>
    <property type="match status" value="1"/>
</dbReference>
<dbReference type="Gene3D" id="2.40.30.10">
    <property type="entry name" value="Translation factors"/>
    <property type="match status" value="1"/>
</dbReference>
<dbReference type="HAMAP" id="MF_00144">
    <property type="entry name" value="tRNA_thiouridyl_MnmA"/>
    <property type="match status" value="1"/>
</dbReference>
<dbReference type="InterPro" id="IPR004506">
    <property type="entry name" value="MnmA-like"/>
</dbReference>
<dbReference type="InterPro" id="IPR046885">
    <property type="entry name" value="MnmA-like_C"/>
</dbReference>
<dbReference type="InterPro" id="IPR046884">
    <property type="entry name" value="MnmA-like_central"/>
</dbReference>
<dbReference type="InterPro" id="IPR023382">
    <property type="entry name" value="MnmA-like_central_sf"/>
</dbReference>
<dbReference type="InterPro" id="IPR014729">
    <property type="entry name" value="Rossmann-like_a/b/a_fold"/>
</dbReference>
<dbReference type="NCBIfam" id="NF001138">
    <property type="entry name" value="PRK00143.1"/>
    <property type="match status" value="1"/>
</dbReference>
<dbReference type="NCBIfam" id="TIGR00420">
    <property type="entry name" value="trmU"/>
    <property type="match status" value="1"/>
</dbReference>
<dbReference type="PANTHER" id="PTHR11933:SF5">
    <property type="entry name" value="MITOCHONDRIAL TRNA-SPECIFIC 2-THIOURIDYLASE 1"/>
    <property type="match status" value="1"/>
</dbReference>
<dbReference type="PANTHER" id="PTHR11933">
    <property type="entry name" value="TRNA 5-METHYLAMINOMETHYL-2-THIOURIDYLATE -METHYLTRANSFERASE"/>
    <property type="match status" value="1"/>
</dbReference>
<dbReference type="Pfam" id="PF03054">
    <property type="entry name" value="tRNA_Me_trans"/>
    <property type="match status" value="1"/>
</dbReference>
<dbReference type="Pfam" id="PF20258">
    <property type="entry name" value="tRNA_Me_trans_C"/>
    <property type="match status" value="1"/>
</dbReference>
<dbReference type="Pfam" id="PF20259">
    <property type="entry name" value="tRNA_Me_trans_M"/>
    <property type="match status" value="1"/>
</dbReference>
<dbReference type="SUPFAM" id="SSF52402">
    <property type="entry name" value="Adenine nucleotide alpha hydrolases-like"/>
    <property type="match status" value="1"/>
</dbReference>
<keyword id="KW-0067">ATP-binding</keyword>
<keyword id="KW-0963">Cytoplasm</keyword>
<keyword id="KW-1015">Disulfide bond</keyword>
<keyword id="KW-0547">Nucleotide-binding</keyword>
<keyword id="KW-0694">RNA-binding</keyword>
<keyword id="KW-0808">Transferase</keyword>
<keyword id="KW-0819">tRNA processing</keyword>
<keyword id="KW-0820">tRNA-binding</keyword>
<organism>
    <name type="scientific">Trichodesmium erythraeum (strain IMS101)</name>
    <dbReference type="NCBI Taxonomy" id="203124"/>
    <lineage>
        <taxon>Bacteria</taxon>
        <taxon>Bacillati</taxon>
        <taxon>Cyanobacteriota</taxon>
        <taxon>Cyanophyceae</taxon>
        <taxon>Oscillatoriophycideae</taxon>
        <taxon>Oscillatoriales</taxon>
        <taxon>Microcoleaceae</taxon>
        <taxon>Trichodesmium</taxon>
    </lineage>
</organism>
<name>MNMA_TRIEI</name>
<accession>Q118B7</accession>
<evidence type="ECO:0000255" key="1">
    <source>
        <dbReference type="HAMAP-Rule" id="MF_00144"/>
    </source>
</evidence>
<feature type="chain" id="PRO_0000349851" description="tRNA-specific 2-thiouridylase MnmA">
    <location>
        <begin position="1"/>
        <end position="359"/>
    </location>
</feature>
<feature type="region of interest" description="Interaction with tRNA" evidence="1">
    <location>
        <begin position="143"/>
        <end position="145"/>
    </location>
</feature>
<feature type="region of interest" description="Interaction with tRNA" evidence="1">
    <location>
        <begin position="298"/>
        <end position="299"/>
    </location>
</feature>
<feature type="active site" description="Nucleophile" evidence="1">
    <location>
        <position position="94"/>
    </location>
</feature>
<feature type="active site" description="Cysteine persulfide intermediate" evidence="1">
    <location>
        <position position="193"/>
    </location>
</feature>
<feature type="binding site" evidence="1">
    <location>
        <begin position="7"/>
        <end position="14"/>
    </location>
    <ligand>
        <name>ATP</name>
        <dbReference type="ChEBI" id="CHEBI:30616"/>
    </ligand>
</feature>
<feature type="binding site" evidence="1">
    <location>
        <position position="33"/>
    </location>
    <ligand>
        <name>ATP</name>
        <dbReference type="ChEBI" id="CHEBI:30616"/>
    </ligand>
</feature>
<feature type="binding site" evidence="1">
    <location>
        <position position="119"/>
    </location>
    <ligand>
        <name>ATP</name>
        <dbReference type="ChEBI" id="CHEBI:30616"/>
    </ligand>
</feature>
<feature type="site" description="Interaction with tRNA" evidence="1">
    <location>
        <position position="120"/>
    </location>
</feature>
<feature type="site" description="Interaction with tRNA" evidence="1">
    <location>
        <position position="339"/>
    </location>
</feature>
<feature type="disulfide bond" description="Alternate" evidence="1">
    <location>
        <begin position="94"/>
        <end position="193"/>
    </location>
</feature>
<sequence>MNKIIVGLSGGVDSSTAAAILHHQGYQVEGLTLWLMKGKGQCCSEGMVDAAYICEQLDIPHHIVDTRNLFQANIVDYLVTGYSAGITPLPCSQCNKTVKFGPMLAYGREKLGIDKIATGHYARLDYDSKSDRYLLKRAIDRNKDQSYFLYDLTQYLLAGSVFPLGEMVKSETRRIAAEYGLKTADKPESQDLCLVESSGSMRAFLDKYITPHQGEIVDREGRVLGRHDGVHHYTIGQRKGLGVSAPHPLYVIDLDPAMNKVIVGDRDSATKMESTVKLVNWVSIAPPSTSIRAEVQVRYRSLPVAANIIPLGVNEEKPQDGFRVKLIFEEAVFGITPGQAAVWYEGDILLGGGIIENEK</sequence>
<gene>
    <name evidence="1" type="primary">mnmA</name>
    <name type="ordered locus">Tery_0725</name>
</gene>
<protein>
    <recommendedName>
        <fullName evidence="1">tRNA-specific 2-thiouridylase MnmA</fullName>
        <ecNumber evidence="1">2.8.1.13</ecNumber>
    </recommendedName>
</protein>
<comment type="function">
    <text evidence="1">Catalyzes the 2-thiolation of uridine at the wobble position (U34) of tRNA, leading to the formation of s(2)U34.</text>
</comment>
<comment type="catalytic activity">
    <reaction evidence="1">
        <text>S-sulfanyl-L-cysteinyl-[protein] + uridine(34) in tRNA + AH2 + ATP = 2-thiouridine(34) in tRNA + L-cysteinyl-[protein] + A + AMP + diphosphate + H(+)</text>
        <dbReference type="Rhea" id="RHEA:47032"/>
        <dbReference type="Rhea" id="RHEA-COMP:10131"/>
        <dbReference type="Rhea" id="RHEA-COMP:11726"/>
        <dbReference type="Rhea" id="RHEA-COMP:11727"/>
        <dbReference type="Rhea" id="RHEA-COMP:11728"/>
        <dbReference type="ChEBI" id="CHEBI:13193"/>
        <dbReference type="ChEBI" id="CHEBI:15378"/>
        <dbReference type="ChEBI" id="CHEBI:17499"/>
        <dbReference type="ChEBI" id="CHEBI:29950"/>
        <dbReference type="ChEBI" id="CHEBI:30616"/>
        <dbReference type="ChEBI" id="CHEBI:33019"/>
        <dbReference type="ChEBI" id="CHEBI:61963"/>
        <dbReference type="ChEBI" id="CHEBI:65315"/>
        <dbReference type="ChEBI" id="CHEBI:87170"/>
        <dbReference type="ChEBI" id="CHEBI:456215"/>
        <dbReference type="EC" id="2.8.1.13"/>
    </reaction>
</comment>
<comment type="subcellular location">
    <subcellularLocation>
        <location evidence="1">Cytoplasm</location>
    </subcellularLocation>
</comment>
<comment type="similarity">
    <text evidence="1">Belongs to the MnmA/TRMU family.</text>
</comment>
<proteinExistence type="inferred from homology"/>